<keyword id="KW-0004">4Fe-4S</keyword>
<keyword id="KW-0028">Amino-acid biosynthesis</keyword>
<keyword id="KW-0100">Branched-chain amino acid biosynthesis</keyword>
<keyword id="KW-0408">Iron</keyword>
<keyword id="KW-0411">Iron-sulfur</keyword>
<keyword id="KW-0432">Leucine biosynthesis</keyword>
<keyword id="KW-0456">Lyase</keyword>
<keyword id="KW-0479">Metal-binding</keyword>
<sequence>MGKRLLDKLWERHVVATNENGLDLLYIDLHLVHEVTSPQAFEGLRLTNRTVRRPDLTFATMDHNIPTKDVWNITDRIAKQQLDTLRENCKQFQVPLADIGDEEQGIVHVIGPELGLTQPGKTIVCGDSHTATHGAFGALAFGIGTSEVEHVLATQTLWQRKPKAMGIELKGKLPQGVYAKDIILHLLSKYGVAVGTGYVMEFYGEAIHAMDMEERMTLCNMAIEGGAKAGIIAPDEKTFAYVKGRKYAPKDYESIKKKWSELYTDLDVVYDLHILVDVTDLAPYVTWGTNPSMGVRIDEKLPEKHDANDERAFSYMGLSPGQSTYDIPVQHVFIGSCTNSRLSDLEIAASVVKGKKVKEGVRALVVPGSQRVREAAMHKGLHRIFEEAGFEWREPGCSMCLGMNPDQVPEGEHCASTSNRNFEGRQGKGARTHLVSPAMAAAAALYGHFVDIRKESYDGAISYS</sequence>
<organism>
    <name type="scientific">Bacillus cereus (strain B4264)</name>
    <dbReference type="NCBI Taxonomy" id="405532"/>
    <lineage>
        <taxon>Bacteria</taxon>
        <taxon>Bacillati</taxon>
        <taxon>Bacillota</taxon>
        <taxon>Bacilli</taxon>
        <taxon>Bacillales</taxon>
        <taxon>Bacillaceae</taxon>
        <taxon>Bacillus</taxon>
        <taxon>Bacillus cereus group</taxon>
    </lineage>
</organism>
<gene>
    <name evidence="1" type="primary">leuC</name>
    <name type="ordered locus">BCB4264_A1455</name>
</gene>
<feature type="chain" id="PRO_1000135668" description="3-isopropylmalate dehydratase large subunit">
    <location>
        <begin position="1"/>
        <end position="464"/>
    </location>
</feature>
<feature type="binding site" evidence="1">
    <location>
        <position position="337"/>
    </location>
    <ligand>
        <name>[4Fe-4S] cluster</name>
        <dbReference type="ChEBI" id="CHEBI:49883"/>
    </ligand>
</feature>
<feature type="binding site" evidence="1">
    <location>
        <position position="397"/>
    </location>
    <ligand>
        <name>[4Fe-4S] cluster</name>
        <dbReference type="ChEBI" id="CHEBI:49883"/>
    </ligand>
</feature>
<feature type="binding site" evidence="1">
    <location>
        <position position="400"/>
    </location>
    <ligand>
        <name>[4Fe-4S] cluster</name>
        <dbReference type="ChEBI" id="CHEBI:49883"/>
    </ligand>
</feature>
<comment type="function">
    <text evidence="1">Catalyzes the isomerization between 2-isopropylmalate and 3-isopropylmalate, via the formation of 2-isopropylmaleate.</text>
</comment>
<comment type="catalytic activity">
    <reaction evidence="1">
        <text>(2R,3S)-3-isopropylmalate = (2S)-2-isopropylmalate</text>
        <dbReference type="Rhea" id="RHEA:32287"/>
        <dbReference type="ChEBI" id="CHEBI:1178"/>
        <dbReference type="ChEBI" id="CHEBI:35121"/>
        <dbReference type="EC" id="4.2.1.33"/>
    </reaction>
</comment>
<comment type="cofactor">
    <cofactor evidence="1">
        <name>[4Fe-4S] cluster</name>
        <dbReference type="ChEBI" id="CHEBI:49883"/>
    </cofactor>
    <text evidence="1">Binds 1 [4Fe-4S] cluster per subunit.</text>
</comment>
<comment type="pathway">
    <text evidence="1">Amino-acid biosynthesis; L-leucine biosynthesis; L-leucine from 3-methyl-2-oxobutanoate: step 2/4.</text>
</comment>
<comment type="subunit">
    <text evidence="1">Heterodimer of LeuC and LeuD.</text>
</comment>
<comment type="similarity">
    <text evidence="1">Belongs to the aconitase/IPM isomerase family. LeuC type 1 subfamily.</text>
</comment>
<protein>
    <recommendedName>
        <fullName evidence="1">3-isopropylmalate dehydratase large subunit</fullName>
        <ecNumber evidence="1">4.2.1.33</ecNumber>
    </recommendedName>
    <alternativeName>
        <fullName evidence="1">Alpha-IPM isomerase</fullName>
        <shortName evidence="1">IPMI</shortName>
    </alternativeName>
    <alternativeName>
        <fullName evidence="1">Isopropylmalate isomerase</fullName>
    </alternativeName>
</protein>
<proteinExistence type="inferred from homology"/>
<evidence type="ECO:0000255" key="1">
    <source>
        <dbReference type="HAMAP-Rule" id="MF_01026"/>
    </source>
</evidence>
<dbReference type="EC" id="4.2.1.33" evidence="1"/>
<dbReference type="EMBL" id="CP001176">
    <property type="protein sequence ID" value="ACK62799.1"/>
    <property type="molecule type" value="Genomic_DNA"/>
</dbReference>
<dbReference type="RefSeq" id="WP_000518097.1">
    <property type="nucleotide sequence ID" value="NC_011725.1"/>
</dbReference>
<dbReference type="SMR" id="B7HHF7"/>
<dbReference type="KEGG" id="bcb:BCB4264_A1455"/>
<dbReference type="HOGENOM" id="CLU_006714_3_4_9"/>
<dbReference type="UniPathway" id="UPA00048">
    <property type="reaction ID" value="UER00071"/>
</dbReference>
<dbReference type="Proteomes" id="UP000007096">
    <property type="component" value="Chromosome"/>
</dbReference>
<dbReference type="GO" id="GO:0003861">
    <property type="term" value="F:3-isopropylmalate dehydratase activity"/>
    <property type="evidence" value="ECO:0007669"/>
    <property type="project" value="UniProtKB-UniRule"/>
</dbReference>
<dbReference type="GO" id="GO:0051539">
    <property type="term" value="F:4 iron, 4 sulfur cluster binding"/>
    <property type="evidence" value="ECO:0007669"/>
    <property type="project" value="UniProtKB-KW"/>
</dbReference>
<dbReference type="GO" id="GO:0046872">
    <property type="term" value="F:metal ion binding"/>
    <property type="evidence" value="ECO:0007669"/>
    <property type="project" value="UniProtKB-KW"/>
</dbReference>
<dbReference type="GO" id="GO:0009098">
    <property type="term" value="P:L-leucine biosynthetic process"/>
    <property type="evidence" value="ECO:0007669"/>
    <property type="project" value="UniProtKB-UniRule"/>
</dbReference>
<dbReference type="CDD" id="cd01583">
    <property type="entry name" value="IPMI"/>
    <property type="match status" value="1"/>
</dbReference>
<dbReference type="FunFam" id="3.30.499.10:FF:000007">
    <property type="entry name" value="3-isopropylmalate dehydratase large subunit"/>
    <property type="match status" value="1"/>
</dbReference>
<dbReference type="Gene3D" id="3.30.499.10">
    <property type="entry name" value="Aconitase, domain 3"/>
    <property type="match status" value="2"/>
</dbReference>
<dbReference type="HAMAP" id="MF_01026">
    <property type="entry name" value="LeuC_type1"/>
    <property type="match status" value="1"/>
</dbReference>
<dbReference type="InterPro" id="IPR004430">
    <property type="entry name" value="3-IsopropMal_deHydase_lsu"/>
</dbReference>
<dbReference type="InterPro" id="IPR015931">
    <property type="entry name" value="Acnase/IPM_dHydase_lsu_aba_1/3"/>
</dbReference>
<dbReference type="InterPro" id="IPR001030">
    <property type="entry name" value="Acoase/IPM_deHydtase_lsu_aba"/>
</dbReference>
<dbReference type="InterPro" id="IPR018136">
    <property type="entry name" value="Aconitase_4Fe-4S_BS"/>
</dbReference>
<dbReference type="InterPro" id="IPR036008">
    <property type="entry name" value="Aconitase_4Fe-4S_dom"/>
</dbReference>
<dbReference type="InterPro" id="IPR050067">
    <property type="entry name" value="IPM_dehydratase_rel_enz"/>
</dbReference>
<dbReference type="InterPro" id="IPR033941">
    <property type="entry name" value="IPMI_cat"/>
</dbReference>
<dbReference type="NCBIfam" id="TIGR00170">
    <property type="entry name" value="leuC"/>
    <property type="match status" value="1"/>
</dbReference>
<dbReference type="NCBIfam" id="NF004016">
    <property type="entry name" value="PRK05478.1"/>
    <property type="match status" value="1"/>
</dbReference>
<dbReference type="NCBIfam" id="NF009116">
    <property type="entry name" value="PRK12466.1"/>
    <property type="match status" value="1"/>
</dbReference>
<dbReference type="PANTHER" id="PTHR43822:SF9">
    <property type="entry name" value="3-ISOPROPYLMALATE DEHYDRATASE"/>
    <property type="match status" value="1"/>
</dbReference>
<dbReference type="PANTHER" id="PTHR43822">
    <property type="entry name" value="HOMOACONITASE, MITOCHONDRIAL-RELATED"/>
    <property type="match status" value="1"/>
</dbReference>
<dbReference type="Pfam" id="PF00330">
    <property type="entry name" value="Aconitase"/>
    <property type="match status" value="1"/>
</dbReference>
<dbReference type="PRINTS" id="PR00415">
    <property type="entry name" value="ACONITASE"/>
</dbReference>
<dbReference type="SUPFAM" id="SSF53732">
    <property type="entry name" value="Aconitase iron-sulfur domain"/>
    <property type="match status" value="1"/>
</dbReference>
<dbReference type="PROSITE" id="PS00450">
    <property type="entry name" value="ACONITASE_1"/>
    <property type="match status" value="1"/>
</dbReference>
<dbReference type="PROSITE" id="PS01244">
    <property type="entry name" value="ACONITASE_2"/>
    <property type="match status" value="1"/>
</dbReference>
<accession>B7HHF7</accession>
<reference key="1">
    <citation type="submission" date="2008-10" db="EMBL/GenBank/DDBJ databases">
        <title>Genome sequence of Bacillus cereus B4264.</title>
        <authorList>
            <person name="Dodson R.J."/>
            <person name="Durkin A.S."/>
            <person name="Rosovitz M.J."/>
            <person name="Rasko D.A."/>
            <person name="Hoffmaster A."/>
            <person name="Ravel J."/>
            <person name="Sutton G."/>
        </authorList>
    </citation>
    <scope>NUCLEOTIDE SEQUENCE [LARGE SCALE GENOMIC DNA]</scope>
    <source>
        <strain>B4264</strain>
    </source>
</reference>
<name>LEUC_BACC4</name>